<dbReference type="EMBL" id="AL353865">
    <property type="protein sequence ID" value="CAB88997.1"/>
    <property type="molecule type" value="Genomic_DNA"/>
</dbReference>
<dbReference type="EMBL" id="CP002686">
    <property type="protein sequence ID" value="AEE77885.1"/>
    <property type="molecule type" value="Genomic_DNA"/>
</dbReference>
<dbReference type="EMBL" id="BX823820">
    <property type="status" value="NOT_ANNOTATED_CDS"/>
    <property type="molecule type" value="mRNA"/>
</dbReference>
<dbReference type="PIR" id="T49145">
    <property type="entry name" value="T49145"/>
</dbReference>
<dbReference type="SMR" id="Q9LXL9"/>
<dbReference type="STRING" id="3702.Q9LXL9"/>
<dbReference type="PaxDb" id="3702-AT3G44290.1"/>
<dbReference type="ProteomicsDB" id="248927"/>
<dbReference type="EnsemblPlants" id="AT3G44290.1">
    <property type="protein sequence ID" value="AT3G44290.1"/>
    <property type="gene ID" value="AT3G44290"/>
</dbReference>
<dbReference type="Gramene" id="AT3G44290.1">
    <property type="protein sequence ID" value="AT3G44290.1"/>
    <property type="gene ID" value="AT3G44290"/>
</dbReference>
<dbReference type="KEGG" id="ath:AT3G44290"/>
<dbReference type="Araport" id="AT3G44290"/>
<dbReference type="TAIR" id="AT3G44290">
    <property type="gene designation" value="NAC060"/>
</dbReference>
<dbReference type="eggNOG" id="ENOG502QRAU">
    <property type="taxonomic scope" value="Eukaryota"/>
</dbReference>
<dbReference type="HOGENOM" id="CLU_035664_18_0_1"/>
<dbReference type="InParanoid" id="Q9LXL9"/>
<dbReference type="PhylomeDB" id="Q9LXL9"/>
<dbReference type="PRO" id="PR:Q9LXL9"/>
<dbReference type="Proteomes" id="UP000006548">
    <property type="component" value="Chromosome 3"/>
</dbReference>
<dbReference type="ExpressionAtlas" id="Q9LXL9">
    <property type="expression patterns" value="baseline and differential"/>
</dbReference>
<dbReference type="GO" id="GO:0016020">
    <property type="term" value="C:membrane"/>
    <property type="evidence" value="ECO:0007669"/>
    <property type="project" value="UniProtKB-SubCell"/>
</dbReference>
<dbReference type="GO" id="GO:0005634">
    <property type="term" value="C:nucleus"/>
    <property type="evidence" value="ECO:0000314"/>
    <property type="project" value="UniProtKB"/>
</dbReference>
<dbReference type="GO" id="GO:0003677">
    <property type="term" value="F:DNA binding"/>
    <property type="evidence" value="ECO:0007669"/>
    <property type="project" value="UniProtKB-KW"/>
</dbReference>
<dbReference type="GO" id="GO:0003700">
    <property type="term" value="F:DNA-binding transcription factor activity"/>
    <property type="evidence" value="ECO:0000250"/>
    <property type="project" value="TAIR"/>
</dbReference>
<dbReference type="GO" id="GO:0071333">
    <property type="term" value="P:cellular response to glucose stimulus"/>
    <property type="evidence" value="ECO:0000314"/>
    <property type="project" value="UniProtKB"/>
</dbReference>
<dbReference type="Gene3D" id="2.170.150.80">
    <property type="entry name" value="NAC domain"/>
    <property type="match status" value="1"/>
</dbReference>
<dbReference type="InterPro" id="IPR003441">
    <property type="entry name" value="NAC-dom"/>
</dbReference>
<dbReference type="InterPro" id="IPR036093">
    <property type="entry name" value="NAC_dom_sf"/>
</dbReference>
<dbReference type="PANTHER" id="PTHR31744:SF210">
    <property type="entry name" value="NAC DOMAIN-CONTAINING PROTEIN 86-LIKE"/>
    <property type="match status" value="1"/>
</dbReference>
<dbReference type="PANTHER" id="PTHR31744">
    <property type="entry name" value="PROTEIN CUP-SHAPED COTYLEDON 2-RELATED"/>
    <property type="match status" value="1"/>
</dbReference>
<dbReference type="Pfam" id="PF02365">
    <property type="entry name" value="NAM"/>
    <property type="match status" value="1"/>
</dbReference>
<dbReference type="SUPFAM" id="SSF101941">
    <property type="entry name" value="NAC domain"/>
    <property type="match status" value="1"/>
</dbReference>
<dbReference type="PROSITE" id="PS51005">
    <property type="entry name" value="NAC"/>
    <property type="match status" value="1"/>
</dbReference>
<protein>
    <recommendedName>
        <fullName evidence="6">NAC domain-containing protein 60</fullName>
        <shortName evidence="6">ANAC060</shortName>
    </recommendedName>
    <alternativeName>
        <fullName evidence="7">Protein NTM1-like 5</fullName>
    </alternativeName>
</protein>
<organism>
    <name type="scientific">Arabidopsis thaliana</name>
    <name type="common">Mouse-ear cress</name>
    <dbReference type="NCBI Taxonomy" id="3702"/>
    <lineage>
        <taxon>Eukaryota</taxon>
        <taxon>Viridiplantae</taxon>
        <taxon>Streptophyta</taxon>
        <taxon>Embryophyta</taxon>
        <taxon>Tracheophyta</taxon>
        <taxon>Spermatophyta</taxon>
        <taxon>Magnoliopsida</taxon>
        <taxon>eudicotyledons</taxon>
        <taxon>Gunneridae</taxon>
        <taxon>Pentapetalae</taxon>
        <taxon>rosids</taxon>
        <taxon>malvids</taxon>
        <taxon>Brassicales</taxon>
        <taxon>Brassicaceae</taxon>
        <taxon>Camelineae</taxon>
        <taxon>Arabidopsis</taxon>
    </lineage>
</organism>
<accession>Q9LXL9</accession>
<name>NAC60_ARATH</name>
<gene>
    <name evidence="10" type="primary">NAC60</name>
    <name evidence="7" type="synonym">NTL5</name>
    <name evidence="9" type="ordered locus">At3g44290</name>
    <name evidence="11" type="ORF">T10D17.80</name>
</gene>
<proteinExistence type="evidence at transcript level"/>
<comment type="function">
    <text evidence="1 5">Transcriptional activator activated by proteolytic cleavage through regulated intramembrane proteolysis (RIP) (By similarity). Transcription factor involved in modulation of abscisic acid (ABA) signaling. Attenuates ABA sensitivity and glucose-induced ABA accumulation. Reduces the expression of ABI4 gene.</text>
</comment>
<comment type="subcellular location">
    <subcellularLocation>
        <location evidence="1">Membrane</location>
        <topology evidence="2">Single-pass membrane protein</topology>
    </subcellularLocation>
    <subcellularLocation>
        <location evidence="3 5">Nucleus</location>
    </subcellularLocation>
    <text evidence="1">Localized primarily in plasma membrane or endoplasmic reticulum membrane as dormant form and, upon specific stress or signal, is processed into a transcriptionally active and nuclear form after a proteolytic cleavage through regulated intramembrane proteolysis (RIP).</text>
</comment>
<comment type="tissue specificity">
    <text evidence="4">Expressed in roots, rosette leaves, cauline leaves, shoot apex, stems and flowers.</text>
</comment>
<comment type="induction">
    <text evidence="4 5">By glucose (PubMed:24625790). Induced by salt, drought stress and methyl methanesulfonate (MMS) treatment (PubMed:17158162).</text>
</comment>
<comment type="domain">
    <text evidence="3">The NAC domain includes a DNA binding domain and a dimerization domain.</text>
</comment>
<comment type="sequence caution" evidence="8">
    <conflict type="miscellaneous discrepancy">
        <sequence resource="EMBL" id="BX823820"/>
    </conflict>
    <text>Sequencing errors.</text>
</comment>
<keyword id="KW-0010">Activator</keyword>
<keyword id="KW-0238">DNA-binding</keyword>
<keyword id="KW-0472">Membrane</keyword>
<keyword id="KW-0539">Nucleus</keyword>
<keyword id="KW-1185">Reference proteome</keyword>
<keyword id="KW-0346">Stress response</keyword>
<keyword id="KW-0804">Transcription</keyword>
<keyword id="KW-0805">Transcription regulation</keyword>
<keyword id="KW-0812">Transmembrane</keyword>
<keyword id="KW-1133">Transmembrane helix</keyword>
<feature type="chain" id="PRO_0000432445" description="NAC domain-containing protein 60">
    <location>
        <begin position="1"/>
        <end position="335"/>
    </location>
</feature>
<feature type="transmembrane region" description="Helical" evidence="2">
    <location>
        <begin position="315"/>
        <end position="335"/>
    </location>
</feature>
<feature type="domain" description="NAC" evidence="3">
    <location>
        <begin position="14"/>
        <end position="156"/>
    </location>
</feature>
<feature type="DNA-binding region" evidence="3">
    <location>
        <begin position="112"/>
        <end position="162"/>
    </location>
</feature>
<sequence length="335" mass="38063">MAAAPPIEPAVTTTFPGFKFSPTDIELISYYLKRKMDGLERSVEIIPEVEIYNFEPWDLPDKSIVKSDSEWFFFCARGKKYPHGSQNRRATKIGYWKATGKERNVKSGSEVIGTKRTLVFHIGRAPKGGRTEWLMHEYCMIGVSLDALVICRLRRNTEFQGSTIQKPPQPSLPLDKHVNLRNEAISESIYGWETMVDFYLSSESGQELLSEIAESSQSSQNPQVPSEEDFYADILRDEIVKLDDPAVSGNTLINVPRLQTESNTTRVLPLPDMVDKQMQSLLQKLPLQNDTGEENNISMSNCFIGIYSIKSINRARWDVVVWLLVMIAVLVFYLV</sequence>
<reference key="1">
    <citation type="journal article" date="2000" name="Nature">
        <title>Sequence and analysis of chromosome 3 of the plant Arabidopsis thaliana.</title>
        <authorList>
            <person name="Salanoubat M."/>
            <person name="Lemcke K."/>
            <person name="Rieger M."/>
            <person name="Ansorge W."/>
            <person name="Unseld M."/>
            <person name="Fartmann B."/>
            <person name="Valle G."/>
            <person name="Bloecker H."/>
            <person name="Perez-Alonso M."/>
            <person name="Obermaier B."/>
            <person name="Delseny M."/>
            <person name="Boutry M."/>
            <person name="Grivell L.A."/>
            <person name="Mache R."/>
            <person name="Puigdomenech P."/>
            <person name="De Simone V."/>
            <person name="Choisne N."/>
            <person name="Artiguenave F."/>
            <person name="Robert C."/>
            <person name="Brottier P."/>
            <person name="Wincker P."/>
            <person name="Cattolico L."/>
            <person name="Weissenbach J."/>
            <person name="Saurin W."/>
            <person name="Quetier F."/>
            <person name="Schaefer M."/>
            <person name="Mueller-Auer S."/>
            <person name="Gabel C."/>
            <person name="Fuchs M."/>
            <person name="Benes V."/>
            <person name="Wurmbach E."/>
            <person name="Drzonek H."/>
            <person name="Erfle H."/>
            <person name="Jordan N."/>
            <person name="Bangert S."/>
            <person name="Wiedelmann R."/>
            <person name="Kranz H."/>
            <person name="Voss H."/>
            <person name="Holland R."/>
            <person name="Brandt P."/>
            <person name="Nyakatura G."/>
            <person name="Vezzi A."/>
            <person name="D'Angelo M."/>
            <person name="Pallavicini A."/>
            <person name="Toppo S."/>
            <person name="Simionati B."/>
            <person name="Conrad A."/>
            <person name="Hornischer K."/>
            <person name="Kauer G."/>
            <person name="Loehnert T.-H."/>
            <person name="Nordsiek G."/>
            <person name="Reichelt J."/>
            <person name="Scharfe M."/>
            <person name="Schoen O."/>
            <person name="Bargues M."/>
            <person name="Terol J."/>
            <person name="Climent J."/>
            <person name="Navarro P."/>
            <person name="Collado C."/>
            <person name="Perez-Perez A."/>
            <person name="Ottenwaelder B."/>
            <person name="Duchemin D."/>
            <person name="Cooke R."/>
            <person name="Laudie M."/>
            <person name="Berger-Llauro C."/>
            <person name="Purnelle B."/>
            <person name="Masuy D."/>
            <person name="de Haan M."/>
            <person name="Maarse A.C."/>
            <person name="Alcaraz J.-P."/>
            <person name="Cottet A."/>
            <person name="Casacuberta E."/>
            <person name="Monfort A."/>
            <person name="Argiriou A."/>
            <person name="Flores M."/>
            <person name="Liguori R."/>
            <person name="Vitale D."/>
            <person name="Mannhaupt G."/>
            <person name="Haase D."/>
            <person name="Schoof H."/>
            <person name="Rudd S."/>
            <person name="Zaccaria P."/>
            <person name="Mewes H.-W."/>
            <person name="Mayer K.F.X."/>
            <person name="Kaul S."/>
            <person name="Town C.D."/>
            <person name="Koo H.L."/>
            <person name="Tallon L.J."/>
            <person name="Jenkins J."/>
            <person name="Rooney T."/>
            <person name="Rizzo M."/>
            <person name="Walts A."/>
            <person name="Utterback T."/>
            <person name="Fujii C.Y."/>
            <person name="Shea T.P."/>
            <person name="Creasy T.H."/>
            <person name="Haas B."/>
            <person name="Maiti R."/>
            <person name="Wu D."/>
            <person name="Peterson J."/>
            <person name="Van Aken S."/>
            <person name="Pai G."/>
            <person name="Militscher J."/>
            <person name="Sellers P."/>
            <person name="Gill J.E."/>
            <person name="Feldblyum T.V."/>
            <person name="Preuss D."/>
            <person name="Lin X."/>
            <person name="Nierman W.C."/>
            <person name="Salzberg S.L."/>
            <person name="White O."/>
            <person name="Venter J.C."/>
            <person name="Fraser C.M."/>
            <person name="Kaneko T."/>
            <person name="Nakamura Y."/>
            <person name="Sato S."/>
            <person name="Kato T."/>
            <person name="Asamizu E."/>
            <person name="Sasamoto S."/>
            <person name="Kimura T."/>
            <person name="Idesawa K."/>
            <person name="Kawashima K."/>
            <person name="Kishida Y."/>
            <person name="Kiyokawa C."/>
            <person name="Kohara M."/>
            <person name="Matsumoto M."/>
            <person name="Matsuno A."/>
            <person name="Muraki A."/>
            <person name="Nakayama S."/>
            <person name="Nakazaki N."/>
            <person name="Shinpo S."/>
            <person name="Takeuchi C."/>
            <person name="Wada T."/>
            <person name="Watanabe A."/>
            <person name="Yamada M."/>
            <person name="Yasuda M."/>
            <person name="Tabata S."/>
        </authorList>
    </citation>
    <scope>NUCLEOTIDE SEQUENCE [LARGE SCALE GENOMIC DNA]</scope>
    <source>
        <strain>cv. Columbia</strain>
    </source>
</reference>
<reference key="2">
    <citation type="journal article" date="2017" name="Plant J.">
        <title>Araport11: a complete reannotation of the Arabidopsis thaliana reference genome.</title>
        <authorList>
            <person name="Cheng C.Y."/>
            <person name="Krishnakumar V."/>
            <person name="Chan A.P."/>
            <person name="Thibaud-Nissen F."/>
            <person name="Schobel S."/>
            <person name="Town C.D."/>
        </authorList>
    </citation>
    <scope>GENOME REANNOTATION</scope>
    <source>
        <strain>cv. Columbia</strain>
    </source>
</reference>
<reference key="3">
    <citation type="journal article" date="2004" name="Genome Res.">
        <title>Whole genome sequence comparisons and 'full-length' cDNA sequences: a combined approach to evaluate and improve Arabidopsis genome annotation.</title>
        <authorList>
            <person name="Castelli V."/>
            <person name="Aury J.-M."/>
            <person name="Jaillon O."/>
            <person name="Wincker P."/>
            <person name="Clepet C."/>
            <person name="Menard M."/>
            <person name="Cruaud C."/>
            <person name="Quetier F."/>
            <person name="Scarpelli C."/>
            <person name="Schaechter V."/>
            <person name="Temple G."/>
            <person name="Caboche M."/>
            <person name="Weissenbach J."/>
            <person name="Salanoubat M."/>
        </authorList>
    </citation>
    <scope>NUCLEOTIDE SEQUENCE [LARGE SCALE MRNA]</scope>
    <source>
        <strain>cv. Columbia</strain>
    </source>
</reference>
<reference key="4">
    <citation type="journal article" date="2003" name="DNA Res.">
        <title>Comprehensive analysis of NAC family genes in Oryza sativa and Arabidopsis thaliana.</title>
        <authorList>
            <person name="Ooka H."/>
            <person name="Satoh K."/>
            <person name="Doi K."/>
            <person name="Nagata T."/>
            <person name="Otomo Y."/>
            <person name="Murakami K."/>
            <person name="Matsubara K."/>
            <person name="Osato N."/>
            <person name="Kawai J."/>
            <person name="Carninci P."/>
            <person name="Hayashizaki Y."/>
            <person name="Suzuki K."/>
            <person name="Kojima K."/>
            <person name="Takahara Y."/>
            <person name="Yamamoto K."/>
            <person name="Kikuchi S."/>
        </authorList>
    </citation>
    <scope>GENE FAMILY</scope>
    <scope>NOMENCLATURE</scope>
</reference>
<reference key="5">
    <citation type="journal article" date="2007" name="Nucleic Acids Res.">
        <title>Exploring membrane-associated NAC transcription factors in Arabidopsis: implications for membrane biology in genome regulation.</title>
        <authorList>
            <person name="Kim S.Y."/>
            <person name="Kim S.G."/>
            <person name="Kim Y.S."/>
            <person name="Seo P.J."/>
            <person name="Bae M."/>
            <person name="Yoon H.K."/>
            <person name="Park C.M."/>
        </authorList>
    </citation>
    <scope>GENE FAMILY</scope>
    <scope>NOMENCLATURE</scope>
    <scope>TISSUE SPECIFICITY</scope>
    <scope>INDUCTION</scope>
</reference>
<reference key="6">
    <citation type="journal article" date="2014" name="PLoS Genet.">
        <title>The ABI4-induced Arabidopsis ANAC060 transcription factor attenuates ABA signaling and renders seedlings sugar insensitive when present in the nucleus.</title>
        <authorList>
            <person name="Li P."/>
            <person name="Zhou H."/>
            <person name="Shi X."/>
            <person name="Yu B."/>
            <person name="Zhou Y."/>
            <person name="Chen S."/>
            <person name="Wang Y."/>
            <person name="Peng Y."/>
            <person name="Meyer R.C."/>
            <person name="Smeekens S.C."/>
            <person name="Teng S."/>
        </authorList>
    </citation>
    <scope>FUNCTION</scope>
    <scope>SUBCELLULAR LOCATION</scope>
    <scope>INDUCTION BY GLUCOSE</scope>
</reference>
<evidence type="ECO:0000250" key="1">
    <source>
        <dbReference type="UniProtKB" id="Q949N0"/>
    </source>
</evidence>
<evidence type="ECO:0000255" key="2"/>
<evidence type="ECO:0000255" key="3">
    <source>
        <dbReference type="PROSITE-ProRule" id="PRU00353"/>
    </source>
</evidence>
<evidence type="ECO:0000269" key="4">
    <source>
    </source>
</evidence>
<evidence type="ECO:0000269" key="5">
    <source>
    </source>
</evidence>
<evidence type="ECO:0000303" key="6">
    <source>
    </source>
</evidence>
<evidence type="ECO:0000303" key="7">
    <source>
    </source>
</evidence>
<evidence type="ECO:0000305" key="8"/>
<evidence type="ECO:0000312" key="9">
    <source>
        <dbReference type="Araport" id="AT3G44290"/>
    </source>
</evidence>
<evidence type="ECO:0000312" key="10">
    <source>
        <dbReference type="EMBL" id="AEE77885.1"/>
    </source>
</evidence>
<evidence type="ECO:0000312" key="11">
    <source>
        <dbReference type="EMBL" id="CAB88997.1"/>
    </source>
</evidence>